<proteinExistence type="inferred from homology"/>
<name>G3P_BPPF3</name>
<organism>
    <name type="scientific">Pseudomonas phage Pf3</name>
    <name type="common">Bacteriophage Pf3</name>
    <dbReference type="NCBI Taxonomy" id="10872"/>
    <lineage>
        <taxon>Viruses</taxon>
        <taxon>Monodnaviria</taxon>
        <taxon>Loebvirae</taxon>
        <taxon>Hofneiviricota</taxon>
        <taxon>Faserviricetes</taxon>
        <taxon>Tubulavirales</taxon>
        <taxon>Inoviridae</taxon>
        <taxon>Tertilicivirus</taxon>
        <taxon>Tertilicivirus Pf3</taxon>
    </lineage>
</organism>
<sequence>MGLHYLFGFCLALFSFSAIAAGPVSTEVAAGTTTYRVTNTTVRTPPNVTLSPVRDITPYVEKIPNKGLAQAAQGRLIVAQRAASVPVTGFFNVSGAVVKSGAKSFLRSAGRASGIGLGLAALLEAADWVFDEEGEIVKPLPGGGSPVLMPRPVILNEYTVTGSAGQWSISKEYEPDPRSVPGWYSYNGNPVWVSAVEDVGFTWRYWYFADVLMDGQGRPNYLVAYSDSGPNEYWQDVGGYSLDSLPTEPEFVPLTDAELEAGIDQYYEPDPDDWRNLFPYIEPDSFTIETPIPSLDLSPVVSSSTNNQTGKVTVTETTTSVDFEVSDNNSSQPSISVNETTTENVYVDGDLVSSETNTTVTNPPSSGTSTPPSSGSGSDFQLPSFCSWATAVCDWFDWTQEPIDEEPDLSGIISDIDDLERTKDISFGSKSCPAPIALDIEFLDMSVDLSFEWFCELAGIIYFMVMASAYVLAAYITLGVVRG</sequence>
<evidence type="ECO:0000250" key="1">
    <source>
        <dbReference type="UniProtKB" id="O80297"/>
    </source>
</evidence>
<evidence type="ECO:0000250" key="2">
    <source>
        <dbReference type="UniProtKB" id="P03661"/>
    </source>
</evidence>
<evidence type="ECO:0000255" key="3"/>
<evidence type="ECO:0000256" key="4">
    <source>
        <dbReference type="SAM" id="MobiDB-lite"/>
    </source>
</evidence>
<evidence type="ECO:0000305" key="5"/>
<accession>P03624</accession>
<comment type="function">
    <text evidence="1 2">Plays essential roles both in the penetration of the viral genome into the bacterial host via pilus retraction and in the extrusion process (By similarity). During the initial step of infection, G3P mediates adsorption of the phage to its primary receptor, the tip of host type IV PAO pilus (By similarity). Attachment of the phage causes pilus retraction bringing the viral particle into close proximity of the host cell inner membrane (By similarity). Subsequent interaction with a secondary host entry receptor induces penetration of the viral DNA into the host cytoplasm (By similarity). In the extrusion process, G3P mediates the release of the membrane-anchored virion from the cell via its C-terminal domain (By similarity).</text>
</comment>
<comment type="subunit">
    <text evidence="2">Interacts with G6P; this interaction is required for proper integration of G3P and G6P into the virion (By similarity). Interacts with G8P. Interacts with the tip of the host pilus (By similarity).</text>
</comment>
<comment type="subcellular location">
    <subcellularLocation>
        <location evidence="5">Virion</location>
    </subcellularLocation>
    <subcellularLocation>
        <location evidence="5">Host membrane</location>
        <topology evidence="5">Single-pass type I membrane protein</topology>
    </subcellularLocation>
    <text>Prior to assembly, G3P is found associated with the bacterial host inner membrane. There are about five copies of this protein per mature phage that are located on the head side of the filamentous virion.</text>
</comment>
<comment type="miscellaneous">
    <text>The strain Nijmegen sequence is shown.</text>
</comment>
<comment type="similarity">
    <text evidence="5">Belongs to the inovirus G3P protein family.</text>
</comment>
<feature type="signal peptide" evidence="3">
    <location>
        <begin position="1"/>
        <end position="20"/>
    </location>
</feature>
<feature type="chain" id="PRO_0000098208" description="Attachment protein G3P">
    <location>
        <begin position="21"/>
        <end position="483"/>
    </location>
</feature>
<feature type="transmembrane region" description="Helical" evidence="3">
    <location>
        <begin position="460"/>
        <end position="480"/>
    </location>
</feature>
<feature type="region of interest" description="Disordered" evidence="4">
    <location>
        <begin position="324"/>
        <end position="343"/>
    </location>
</feature>
<feature type="region of interest" description="Disordered" evidence="4">
    <location>
        <begin position="354"/>
        <end position="378"/>
    </location>
</feature>
<feature type="compositionally biased region" description="Polar residues" evidence="4">
    <location>
        <begin position="326"/>
        <end position="343"/>
    </location>
</feature>
<feature type="sequence variant" description="In strain: New York.">
    <original>L</original>
    <variation>F</variation>
    <location>
        <position position="419"/>
    </location>
</feature>
<protein>
    <recommendedName>
        <fullName>Attachment protein G3P</fullName>
    </recommendedName>
    <alternativeName>
        <fullName>Gene 3 protein</fullName>
        <shortName>G3P</shortName>
    </alternativeName>
    <alternativeName>
        <fullName>Minor coat protein</fullName>
    </alternativeName>
</protein>
<organismHost>
    <name type="scientific">Pseudomonas aeruginosa</name>
    <dbReference type="NCBI Taxonomy" id="287"/>
</organismHost>
<dbReference type="EMBL" id="M11912">
    <property type="protein sequence ID" value="AAA88379.1"/>
    <property type="molecule type" value="Genomic_DNA"/>
</dbReference>
<dbReference type="EMBL" id="M19377">
    <property type="protein sequence ID" value="AAA88388.1"/>
    <property type="molecule type" value="Genomic_DNA"/>
</dbReference>
<dbReference type="PIR" id="A04232">
    <property type="entry name" value="VCBPI3"/>
</dbReference>
<dbReference type="RefSeq" id="NP_040653.1">
    <property type="nucleotide sequence ID" value="NC_001418.1"/>
</dbReference>
<dbReference type="KEGG" id="vg:1260906"/>
<dbReference type="Proteomes" id="UP000001719">
    <property type="component" value="Genome"/>
</dbReference>
<dbReference type="Proteomes" id="UP000009090">
    <property type="component" value="Genome"/>
</dbReference>
<dbReference type="GO" id="GO:0033644">
    <property type="term" value="C:host cell membrane"/>
    <property type="evidence" value="ECO:0007669"/>
    <property type="project" value="UniProtKB-SubCell"/>
</dbReference>
<dbReference type="GO" id="GO:0016020">
    <property type="term" value="C:membrane"/>
    <property type="evidence" value="ECO:0007669"/>
    <property type="project" value="UniProtKB-KW"/>
</dbReference>
<dbReference type="GO" id="GO:0044423">
    <property type="term" value="C:virion component"/>
    <property type="evidence" value="ECO:0007669"/>
    <property type="project" value="UniProtKB-KW"/>
</dbReference>
<dbReference type="GO" id="GO:0098671">
    <property type="term" value="P:adhesion receptor-mediated virion attachment to host cell"/>
    <property type="evidence" value="ECO:0007669"/>
    <property type="project" value="UniProtKB-KW"/>
</dbReference>
<dbReference type="GO" id="GO:0098670">
    <property type="term" value="P:entry receptor-mediated virion attachment to host cell"/>
    <property type="evidence" value="ECO:0007669"/>
    <property type="project" value="UniProtKB-KW"/>
</dbReference>
<dbReference type="GO" id="GO:0099045">
    <property type="term" value="P:viral extrusion"/>
    <property type="evidence" value="ECO:0007669"/>
    <property type="project" value="UniProtKB-KW"/>
</dbReference>
<dbReference type="GO" id="GO:0039666">
    <property type="term" value="P:virion attachment to host cell pilus"/>
    <property type="evidence" value="ECO:0007669"/>
    <property type="project" value="UniProtKB-KW"/>
</dbReference>
<dbReference type="InterPro" id="IPR008708">
    <property type="entry name" value="Neisseria_TspB"/>
</dbReference>
<dbReference type="NCBIfam" id="NF041109">
    <property type="entry name" value="VF_TspB_C_term"/>
    <property type="match status" value="1"/>
</dbReference>
<dbReference type="Pfam" id="PF05616">
    <property type="entry name" value="Neisseria_TspB"/>
    <property type="match status" value="1"/>
</dbReference>
<gene>
    <name type="primary">III</name>
</gene>
<reference key="1">
    <citation type="journal article" date="1985" name="J. Virol.">
        <title>Nucleotide sequence of the genome of Pf3, an IncP-1 plasmid-specific filamentous bacteriophage of Pseudomonas aeruginosa.</title>
        <authorList>
            <person name="Luiten R.G.M."/>
            <person name="Putterman D.G."/>
            <person name="Schoenmakers J.G.G."/>
            <person name="Konings R.N.H."/>
            <person name="Day L.A."/>
        </authorList>
    </citation>
    <scope>NUCLEOTIDE SEQUENCE [GENOMIC DNA]</scope>
    <source>
        <strain>New York</strain>
        <strain>Nijmegen</strain>
    </source>
</reference>
<reference key="2">
    <citation type="journal article" date="2006" name="Virology">
        <title>Identification and specificity of pilus adsorption proteins of filamentous bacteriophages infecting Pseudomonas aeruginosa.</title>
        <authorList>
            <person name="Holland S.J."/>
            <person name="Sanz C."/>
            <person name="Perham R.N."/>
        </authorList>
    </citation>
    <scope>FUNCTION</scope>
</reference>
<keyword id="KW-1043">Host membrane</keyword>
<keyword id="KW-0945">Host-virus interaction</keyword>
<keyword id="KW-0472">Membrane</keyword>
<keyword id="KW-1185">Reference proteome</keyword>
<keyword id="KW-0732">Signal</keyword>
<keyword id="KW-0812">Transmembrane</keyword>
<keyword id="KW-1133">Transmembrane helix</keyword>
<keyword id="KW-1233">Viral attachment to host adhesion receptor</keyword>
<keyword id="KW-1161">Viral attachment to host cell</keyword>
<keyword id="KW-1175">Viral attachment to host cell pilus</keyword>
<keyword id="KW-1234">Viral attachment to host entry receptor</keyword>
<keyword id="KW-1249">Viral extrusion</keyword>
<keyword id="KW-1162">Viral penetration into host cytoplasm</keyword>
<keyword id="KW-1241">Viral penetration into host cytoplasm via pilus retraction</keyword>
<keyword id="KW-1188">Viral release from host cell</keyword>
<keyword id="KW-0946">Virion</keyword>
<keyword id="KW-1160">Virus entry into host cell</keyword>